<reference key="1">
    <citation type="journal article" date="2000" name="Biochim. Biophys. Acta">
        <title>The yeast mitochondrial transport proteins: new sequences and consensus residues, lack of direct relation between consensus residues and transmembrane helices, expression patterns of the transport protein genes, and protein-protein interactions with other proteins.</title>
        <authorList>
            <person name="Belenkiy R."/>
            <person name="Haefele A."/>
            <person name="Eisen M.B."/>
            <person name="Wohlrab H."/>
        </authorList>
    </citation>
    <scope>NUCLEOTIDE SEQUENCE [GENOMIC DNA]</scope>
    <source>
        <strain>ATCC 204665 / CG379</strain>
    </source>
</reference>
<reference key="2">
    <citation type="journal article" date="2005" name="Nat. Genet.">
        <title>Quantitative trait loci mapped to single-nucleotide resolution in yeast.</title>
        <authorList>
            <person name="Deutschbauer A.M."/>
            <person name="Davis R.W."/>
        </authorList>
    </citation>
    <scope>NUCLEOTIDE SEQUENCE [GENOMIC DNA]</scope>
    <scope>VARIANT VAL-240</scope>
    <source>
        <strain>SK1</strain>
    </source>
</reference>
<reference key="3">
    <citation type="journal article" date="2004" name="Genetics">
        <title>Sal1p, a calcium-dependent carrier protein that suppresses an essential cellular function associated With the Aac2 isoform of ADP/ATP translocase in Saccharomyces cerevisiae.</title>
        <authorList>
            <person name="Chen X.J."/>
        </authorList>
    </citation>
    <scope>FUNCTION</scope>
    <scope>IDENTIFICATION OF FRAMESHIFT IN SAL1-1</scope>
    <source>
        <strain>ATCC 201238 / W303-1B</strain>
    </source>
</reference>
<gene>
    <name type="primary">SAL1</name>
</gene>
<proteinExistence type="inferred from homology"/>
<evidence type="ECO:0000255" key="1"/>
<evidence type="ECO:0000255" key="2">
    <source>
        <dbReference type="PROSITE-ProRule" id="PRU00448"/>
    </source>
</evidence>
<evidence type="ECO:0000269" key="3">
    <source>
    </source>
</evidence>
<evidence type="ECO:0000269" key="4">
    <source>
    </source>
</evidence>
<evidence type="ECO:0000305" key="5"/>
<dbReference type="EMBL" id="AF419344">
    <property type="protein sequence ID" value="AAL26493.1"/>
    <property type="molecule type" value="Genomic_DNA"/>
</dbReference>
<dbReference type="EMBL" id="DQ115393">
    <property type="protein sequence ID" value="AAZ22525.1"/>
    <property type="molecule type" value="Genomic_DNA"/>
</dbReference>
<dbReference type="SMR" id="P0CI40"/>
<dbReference type="VEuPathDB" id="FungiDB:YNL083W"/>
<dbReference type="OMA" id="SGQWWKQ"/>
<dbReference type="PhylomeDB" id="P0CI40"/>
<dbReference type="GO" id="GO:0005743">
    <property type="term" value="C:mitochondrial inner membrane"/>
    <property type="evidence" value="ECO:0007669"/>
    <property type="project" value="UniProtKB-SubCell"/>
</dbReference>
<dbReference type="GO" id="GO:0005509">
    <property type="term" value="F:calcium ion binding"/>
    <property type="evidence" value="ECO:0007669"/>
    <property type="project" value="InterPro"/>
</dbReference>
<dbReference type="GO" id="GO:0055085">
    <property type="term" value="P:transmembrane transport"/>
    <property type="evidence" value="ECO:0007669"/>
    <property type="project" value="InterPro"/>
</dbReference>
<dbReference type="FunFam" id="1.50.40.10:FF:000016">
    <property type="entry name" value="Solute carrier family 25 member 23"/>
    <property type="match status" value="1"/>
</dbReference>
<dbReference type="Gene3D" id="1.10.238.10">
    <property type="entry name" value="EF-hand"/>
    <property type="match status" value="1"/>
</dbReference>
<dbReference type="Gene3D" id="1.50.40.10">
    <property type="entry name" value="Mitochondrial carrier domain"/>
    <property type="match status" value="1"/>
</dbReference>
<dbReference type="InterPro" id="IPR011992">
    <property type="entry name" value="EF-hand-dom_pair"/>
</dbReference>
<dbReference type="InterPro" id="IPR018247">
    <property type="entry name" value="EF_Hand_1_Ca_BS"/>
</dbReference>
<dbReference type="InterPro" id="IPR002048">
    <property type="entry name" value="EF_hand_dom"/>
</dbReference>
<dbReference type="InterPro" id="IPR002067">
    <property type="entry name" value="Mit_carrier"/>
</dbReference>
<dbReference type="InterPro" id="IPR018108">
    <property type="entry name" value="Mitochondrial_sb/sol_carrier"/>
</dbReference>
<dbReference type="InterPro" id="IPR023395">
    <property type="entry name" value="Mt_carrier_dom_sf"/>
</dbReference>
<dbReference type="PANTHER" id="PTHR24089">
    <property type="entry name" value="SOLUTE CARRIER FAMILY 25"/>
    <property type="match status" value="1"/>
</dbReference>
<dbReference type="Pfam" id="PF13202">
    <property type="entry name" value="EF-hand_5"/>
    <property type="match status" value="1"/>
</dbReference>
<dbReference type="Pfam" id="PF13499">
    <property type="entry name" value="EF-hand_7"/>
    <property type="match status" value="1"/>
</dbReference>
<dbReference type="Pfam" id="PF00153">
    <property type="entry name" value="Mito_carr"/>
    <property type="match status" value="3"/>
</dbReference>
<dbReference type="PRINTS" id="PR00926">
    <property type="entry name" value="MITOCARRIER"/>
</dbReference>
<dbReference type="SUPFAM" id="SSF47473">
    <property type="entry name" value="EF-hand"/>
    <property type="match status" value="1"/>
</dbReference>
<dbReference type="SUPFAM" id="SSF103506">
    <property type="entry name" value="Mitochondrial carrier"/>
    <property type="match status" value="1"/>
</dbReference>
<dbReference type="PROSITE" id="PS00018">
    <property type="entry name" value="EF_HAND_1"/>
    <property type="match status" value="1"/>
</dbReference>
<dbReference type="PROSITE" id="PS50222">
    <property type="entry name" value="EF_HAND_2"/>
    <property type="match status" value="3"/>
</dbReference>
<dbReference type="PROSITE" id="PS50920">
    <property type="entry name" value="SOLCAR"/>
    <property type="match status" value="3"/>
</dbReference>
<keyword id="KW-0106">Calcium</keyword>
<keyword id="KW-0472">Membrane</keyword>
<keyword id="KW-0479">Metal-binding</keyword>
<keyword id="KW-0496">Mitochondrion</keyword>
<keyword id="KW-0999">Mitochondrion inner membrane</keyword>
<keyword id="KW-0677">Repeat</keyword>
<keyword id="KW-0812">Transmembrane</keyword>
<keyword id="KW-1133">Transmembrane helix</keyword>
<keyword id="KW-0813">Transport</keyword>
<sequence>MLLKNCETDKQRDIRYACLFKELDVKGNGQVTLDNLISAFEKNDHPLKGNDEAIKMLFTAMDVNKDSVVDLSDFKKYASNAESQIWNGFQRIDLDHDGKIGINEINRYLSDLDNQSICNNELNHELSNEKMNKFSRFFEWAFPKRKANIALRGQASHKKNTDNDRSKKTTDSDLYVTYDQWRDFLLLVPRKQGSRLHTAYSYFYLFNEDVDLSSEGDVTLINDFIRGFGFFIAGGISGVISRTCTAPFDRLKVFLIARTDLSSILLNSKTDLLAKNPNADINKISSPLAKAVKSLYRQGGIKAFYVGNGLNVIKVFPESSIKFGSFEVTKKIMTKLEGCRDTKDLSKFSTYIAGGLAGMAAQFSVYPIDTLKFRVQCAPLDTKLKGNNLLFQTAKDMFREGGLRLFYRGVTVGIVGIFPYAALDLGTFSALKKWYIAKQAKTLNLPQDQVTLSNLVVLPMGAFSGTVGASVVYPINLLRTRLQAQGTYAHPYVYNGFKDVLLKTLEREGYQGLFKGLVPTLAKVCPAVSISYLCYENLKKFMNLE</sequence>
<feature type="chain" id="PRO_0000090607" description="Calcium-binding mitochondrial carrier SAL1">
    <location>
        <begin position="1"/>
        <end position="545"/>
    </location>
</feature>
<feature type="transmembrane region" description="Helical; Name=1" evidence="1">
    <location>
        <begin position="231"/>
        <end position="248"/>
    </location>
</feature>
<feature type="transmembrane region" description="Helical; Name=2" evidence="1">
    <location>
        <begin position="307"/>
        <end position="326"/>
    </location>
</feature>
<feature type="transmembrane region" description="Helical; Name=3" evidence="1">
    <location>
        <begin position="355"/>
        <end position="368"/>
    </location>
</feature>
<feature type="transmembrane region" description="Helical; Name=4" evidence="1">
    <location>
        <begin position="409"/>
        <end position="428"/>
    </location>
</feature>
<feature type="transmembrane region" description="Helical; Name=5" evidence="1">
    <location>
        <begin position="458"/>
        <end position="475"/>
    </location>
</feature>
<feature type="transmembrane region" description="Helical; Name=6" evidence="1">
    <location>
        <begin position="516"/>
        <end position="535"/>
    </location>
</feature>
<feature type="domain" description="EF-hand 1" evidence="2">
    <location>
        <begin position="11"/>
        <end position="46"/>
    </location>
</feature>
<feature type="domain" description="EF-hand 2" evidence="2">
    <location>
        <begin position="80"/>
        <end position="115"/>
    </location>
</feature>
<feature type="domain" description="EF-hand 3" evidence="5">
    <location>
        <begin position="120"/>
        <end position="155"/>
    </location>
</feature>
<feature type="domain" description="EF-hand 4" evidence="2">
    <location>
        <begin position="156"/>
        <end position="191"/>
    </location>
</feature>
<feature type="repeat" description="Solcar 1">
    <location>
        <begin position="225"/>
        <end position="332"/>
    </location>
</feature>
<feature type="repeat" description="Solcar 2">
    <location>
        <begin position="345"/>
        <end position="434"/>
    </location>
</feature>
<feature type="repeat" description="Solcar 3">
    <location>
        <begin position="452"/>
        <end position="541"/>
    </location>
</feature>
<feature type="binding site" evidence="5">
    <location>
        <position position="65"/>
    </location>
    <ligand>
        <name>Ca(2+)</name>
        <dbReference type="ChEBI" id="CHEBI:29108"/>
        <label>1</label>
    </ligand>
</feature>
<feature type="binding site" evidence="5">
    <location>
        <position position="70"/>
    </location>
    <ligand>
        <name>Ca(2+)</name>
        <dbReference type="ChEBI" id="CHEBI:29108"/>
        <label>1</label>
    </ligand>
</feature>
<feature type="binding site" evidence="2">
    <location>
        <position position="93"/>
    </location>
    <ligand>
        <name>Ca(2+)</name>
        <dbReference type="ChEBI" id="CHEBI:29108"/>
        <label>2</label>
    </ligand>
</feature>
<feature type="binding site" evidence="2">
    <location>
        <position position="95"/>
    </location>
    <ligand>
        <name>Ca(2+)</name>
        <dbReference type="ChEBI" id="CHEBI:29108"/>
        <label>2</label>
    </ligand>
</feature>
<feature type="binding site" evidence="2">
    <location>
        <position position="97"/>
    </location>
    <ligand>
        <name>Ca(2+)</name>
        <dbReference type="ChEBI" id="CHEBI:29108"/>
        <label>2</label>
    </ligand>
</feature>
<feature type="binding site" evidence="2">
    <location>
        <position position="99"/>
    </location>
    <ligand>
        <name>Ca(2+)</name>
        <dbReference type="ChEBI" id="CHEBI:29108"/>
        <label>2</label>
    </ligand>
</feature>
<feature type="binding site" evidence="2">
    <location>
        <position position="104"/>
    </location>
    <ligand>
        <name>Ca(2+)</name>
        <dbReference type="ChEBI" id="CHEBI:29108"/>
        <label>2</label>
    </ligand>
</feature>
<feature type="binding site" evidence="5">
    <location>
        <position position="161"/>
    </location>
    <ligand>
        <name>Ca(2+)</name>
        <dbReference type="ChEBI" id="CHEBI:29108"/>
        <label>3</label>
    </ligand>
</feature>
<feature type="binding site" evidence="5">
    <location>
        <position position="166"/>
    </location>
    <ligand>
        <name>Ca(2+)</name>
        <dbReference type="ChEBI" id="CHEBI:29108"/>
        <label>3</label>
    </ligand>
</feature>
<feature type="sequence variant" description="In strain: SK1." evidence="4">
    <original>I</original>
    <variation>V</variation>
    <location>
        <position position="240"/>
    </location>
</feature>
<name>CMC1_YEASX</name>
<accession>P0CI40</accession>
<accession>P48233</accession>
<accession>Q45TY5</accession>
<accession>Q6WV05</accession>
<accession>Q96US1</accession>
<organism>
    <name type="scientific">Saccharomyces cerevisiae</name>
    <name type="common">Baker's yeast</name>
    <dbReference type="NCBI Taxonomy" id="4932"/>
    <lineage>
        <taxon>Eukaryota</taxon>
        <taxon>Fungi</taxon>
        <taxon>Dikarya</taxon>
        <taxon>Ascomycota</taxon>
        <taxon>Saccharomycotina</taxon>
        <taxon>Saccharomycetes</taxon>
        <taxon>Saccharomycetales</taxon>
        <taxon>Saccharomycetaceae</taxon>
        <taxon>Saccharomyces</taxon>
    </lineage>
</organism>
<protein>
    <recommendedName>
        <fullName>Calcium-binding mitochondrial carrier SAL1</fullName>
    </recommendedName>
    <alternativeName>
        <fullName>Suppressor of AAC2 lethality</fullName>
    </alternativeName>
</protein>
<comment type="function">
    <text evidence="3">Calcium-dependent mitochondrial solute carrier.</text>
</comment>
<comment type="subcellular location">
    <subcellularLocation>
        <location evidence="5">Mitochondrion inner membrane</location>
        <topology evidence="5">Multi-pass membrane protein</topology>
    </subcellularLocation>
</comment>
<comment type="similarity">
    <text evidence="5">Belongs to the mitochondrial carrier (TC 2.A.29) family.</text>
</comment>